<gene>
    <name evidence="1" type="primary">rplR</name>
    <name type="ordered locus">LEUM_0211</name>
</gene>
<evidence type="ECO:0000255" key="1">
    <source>
        <dbReference type="HAMAP-Rule" id="MF_01337"/>
    </source>
</evidence>
<evidence type="ECO:0000305" key="2"/>
<protein>
    <recommendedName>
        <fullName evidence="1">Large ribosomal subunit protein uL18</fullName>
    </recommendedName>
    <alternativeName>
        <fullName evidence="2">50S ribosomal protein L18</fullName>
    </alternativeName>
</protein>
<sequence>MISKPDKNKLRVKRHKRVRGKISGTAARPRLNVFRSNANIYAQLIDDVAGVTLASASSHDAEVTGSKTEQAVKVGELIASRGKAAKIEDVIFDRGGYVYHGRVQALADSARENGLKF</sequence>
<name>RL18_LEUMM</name>
<comment type="function">
    <text evidence="1">This is one of the proteins that bind and probably mediate the attachment of the 5S RNA into the large ribosomal subunit, where it forms part of the central protuberance.</text>
</comment>
<comment type="subunit">
    <text evidence="1">Part of the 50S ribosomal subunit; part of the 5S rRNA/L5/L18/L25 subcomplex. Contacts the 5S and 23S rRNAs.</text>
</comment>
<comment type="similarity">
    <text evidence="1">Belongs to the universal ribosomal protein uL18 family.</text>
</comment>
<reference key="1">
    <citation type="journal article" date="2006" name="Proc. Natl. Acad. Sci. U.S.A.">
        <title>Comparative genomics of the lactic acid bacteria.</title>
        <authorList>
            <person name="Makarova K.S."/>
            <person name="Slesarev A."/>
            <person name="Wolf Y.I."/>
            <person name="Sorokin A."/>
            <person name="Mirkin B."/>
            <person name="Koonin E.V."/>
            <person name="Pavlov A."/>
            <person name="Pavlova N."/>
            <person name="Karamychev V."/>
            <person name="Polouchine N."/>
            <person name="Shakhova V."/>
            <person name="Grigoriev I."/>
            <person name="Lou Y."/>
            <person name="Rohksar D."/>
            <person name="Lucas S."/>
            <person name="Huang K."/>
            <person name="Goodstein D.M."/>
            <person name="Hawkins T."/>
            <person name="Plengvidhya V."/>
            <person name="Welker D."/>
            <person name="Hughes J."/>
            <person name="Goh Y."/>
            <person name="Benson A."/>
            <person name="Baldwin K."/>
            <person name="Lee J.-H."/>
            <person name="Diaz-Muniz I."/>
            <person name="Dosti B."/>
            <person name="Smeianov V."/>
            <person name="Wechter W."/>
            <person name="Barabote R."/>
            <person name="Lorca G."/>
            <person name="Altermann E."/>
            <person name="Barrangou R."/>
            <person name="Ganesan B."/>
            <person name="Xie Y."/>
            <person name="Rawsthorne H."/>
            <person name="Tamir D."/>
            <person name="Parker C."/>
            <person name="Breidt F."/>
            <person name="Broadbent J.R."/>
            <person name="Hutkins R."/>
            <person name="O'Sullivan D."/>
            <person name="Steele J."/>
            <person name="Unlu G."/>
            <person name="Saier M.H. Jr."/>
            <person name="Klaenhammer T."/>
            <person name="Richardson P."/>
            <person name="Kozyavkin S."/>
            <person name="Weimer B.C."/>
            <person name="Mills D.A."/>
        </authorList>
    </citation>
    <scope>NUCLEOTIDE SEQUENCE [LARGE SCALE GENOMIC DNA]</scope>
    <source>
        <strain>ATCC 8293 / DSM 20343 / BCRC 11652 / CCM 1803 / JCM 6124 / NCDO 523 / NBRC 100496 / NCIMB 8023 / NCTC 12954 / NRRL B-1118 / 37Y</strain>
    </source>
</reference>
<proteinExistence type="inferred from homology"/>
<dbReference type="EMBL" id="CP000414">
    <property type="protein sequence ID" value="ABJ61342.1"/>
    <property type="molecule type" value="Genomic_DNA"/>
</dbReference>
<dbReference type="RefSeq" id="WP_002816021.1">
    <property type="nucleotide sequence ID" value="NC_008531.1"/>
</dbReference>
<dbReference type="SMR" id="Q03ZN0"/>
<dbReference type="EnsemblBacteria" id="ABJ61342">
    <property type="protein sequence ID" value="ABJ61342"/>
    <property type="gene ID" value="LEUM_0211"/>
</dbReference>
<dbReference type="GeneID" id="29576466"/>
<dbReference type="KEGG" id="lme:LEUM_0211"/>
<dbReference type="eggNOG" id="COG0256">
    <property type="taxonomic scope" value="Bacteria"/>
</dbReference>
<dbReference type="HOGENOM" id="CLU_098841_0_1_9"/>
<dbReference type="Proteomes" id="UP000000362">
    <property type="component" value="Chromosome"/>
</dbReference>
<dbReference type="GO" id="GO:0022625">
    <property type="term" value="C:cytosolic large ribosomal subunit"/>
    <property type="evidence" value="ECO:0007669"/>
    <property type="project" value="TreeGrafter"/>
</dbReference>
<dbReference type="GO" id="GO:0008097">
    <property type="term" value="F:5S rRNA binding"/>
    <property type="evidence" value="ECO:0007669"/>
    <property type="project" value="TreeGrafter"/>
</dbReference>
<dbReference type="GO" id="GO:0003735">
    <property type="term" value="F:structural constituent of ribosome"/>
    <property type="evidence" value="ECO:0007669"/>
    <property type="project" value="InterPro"/>
</dbReference>
<dbReference type="GO" id="GO:0006412">
    <property type="term" value="P:translation"/>
    <property type="evidence" value="ECO:0007669"/>
    <property type="project" value="UniProtKB-UniRule"/>
</dbReference>
<dbReference type="CDD" id="cd00432">
    <property type="entry name" value="Ribosomal_L18_L5e"/>
    <property type="match status" value="1"/>
</dbReference>
<dbReference type="FunFam" id="3.30.420.100:FF:000001">
    <property type="entry name" value="50S ribosomal protein L18"/>
    <property type="match status" value="1"/>
</dbReference>
<dbReference type="Gene3D" id="3.30.420.100">
    <property type="match status" value="1"/>
</dbReference>
<dbReference type="HAMAP" id="MF_01337_B">
    <property type="entry name" value="Ribosomal_uL18_B"/>
    <property type="match status" value="1"/>
</dbReference>
<dbReference type="InterPro" id="IPR004389">
    <property type="entry name" value="Ribosomal_uL18_bac-type"/>
</dbReference>
<dbReference type="InterPro" id="IPR005484">
    <property type="entry name" value="Ribosomal_uL18_bac/euk"/>
</dbReference>
<dbReference type="NCBIfam" id="TIGR00060">
    <property type="entry name" value="L18_bact"/>
    <property type="match status" value="1"/>
</dbReference>
<dbReference type="PANTHER" id="PTHR12899">
    <property type="entry name" value="39S RIBOSOMAL PROTEIN L18, MITOCHONDRIAL"/>
    <property type="match status" value="1"/>
</dbReference>
<dbReference type="PANTHER" id="PTHR12899:SF3">
    <property type="entry name" value="LARGE RIBOSOMAL SUBUNIT PROTEIN UL18M"/>
    <property type="match status" value="1"/>
</dbReference>
<dbReference type="Pfam" id="PF00861">
    <property type="entry name" value="Ribosomal_L18p"/>
    <property type="match status" value="1"/>
</dbReference>
<dbReference type="SUPFAM" id="SSF53137">
    <property type="entry name" value="Translational machinery components"/>
    <property type="match status" value="1"/>
</dbReference>
<feature type="chain" id="PRO_1000053050" description="Large ribosomal subunit protein uL18">
    <location>
        <begin position="1"/>
        <end position="117"/>
    </location>
</feature>
<keyword id="KW-1185">Reference proteome</keyword>
<keyword id="KW-0687">Ribonucleoprotein</keyword>
<keyword id="KW-0689">Ribosomal protein</keyword>
<keyword id="KW-0694">RNA-binding</keyword>
<keyword id="KW-0699">rRNA-binding</keyword>
<organism>
    <name type="scientific">Leuconostoc mesenteroides subsp. mesenteroides (strain ATCC 8293 / DSM 20343 / BCRC 11652 / CCM 1803 / JCM 6124 / NCDO 523 / NBRC 100496 / NCIMB 8023 / NCTC 12954 / NRRL B-1118 / 37Y)</name>
    <dbReference type="NCBI Taxonomy" id="203120"/>
    <lineage>
        <taxon>Bacteria</taxon>
        <taxon>Bacillati</taxon>
        <taxon>Bacillota</taxon>
        <taxon>Bacilli</taxon>
        <taxon>Lactobacillales</taxon>
        <taxon>Lactobacillaceae</taxon>
        <taxon>Leuconostoc</taxon>
    </lineage>
</organism>
<accession>Q03ZN0</accession>